<name>IF1_GRABC</name>
<evidence type="ECO:0000255" key="1">
    <source>
        <dbReference type="HAMAP-Rule" id="MF_00075"/>
    </source>
</evidence>
<reference key="1">
    <citation type="journal article" date="2007" name="J. Bacteriol.">
        <title>Genome sequence analysis of the emerging human pathogenic acetic acid bacterium Granulibacter bethesdensis.</title>
        <authorList>
            <person name="Greenberg D.E."/>
            <person name="Porcella S.F."/>
            <person name="Zelazny A.M."/>
            <person name="Virtaneva K."/>
            <person name="Sturdevant D.E."/>
            <person name="Kupko J.J. III"/>
            <person name="Barbian K.D."/>
            <person name="Babar A."/>
            <person name="Dorward D.W."/>
            <person name="Holland S.M."/>
        </authorList>
    </citation>
    <scope>NUCLEOTIDE SEQUENCE [LARGE SCALE GENOMIC DNA]</scope>
    <source>
        <strain>ATCC BAA-1260 / CGDNIH1</strain>
    </source>
</reference>
<proteinExistence type="inferred from homology"/>
<organism>
    <name type="scientific">Granulibacter bethesdensis (strain ATCC BAA-1260 / CGDNIH1)</name>
    <dbReference type="NCBI Taxonomy" id="391165"/>
    <lineage>
        <taxon>Bacteria</taxon>
        <taxon>Pseudomonadati</taxon>
        <taxon>Pseudomonadota</taxon>
        <taxon>Alphaproteobacteria</taxon>
        <taxon>Acetobacterales</taxon>
        <taxon>Acetobacteraceae</taxon>
        <taxon>Granulibacter</taxon>
    </lineage>
</organism>
<accession>Q0BTC4</accession>
<feature type="chain" id="PRO_0000263806" description="Translation initiation factor IF-1">
    <location>
        <begin position="1"/>
        <end position="72"/>
    </location>
</feature>
<feature type="domain" description="S1-like" evidence="1">
    <location>
        <begin position="1"/>
        <end position="72"/>
    </location>
</feature>
<gene>
    <name evidence="1" type="primary">infA</name>
    <name type="ordered locus">GbCGDNIH1_1030</name>
</gene>
<keyword id="KW-0963">Cytoplasm</keyword>
<keyword id="KW-0396">Initiation factor</keyword>
<keyword id="KW-0648">Protein biosynthesis</keyword>
<keyword id="KW-1185">Reference proteome</keyword>
<keyword id="KW-0694">RNA-binding</keyword>
<keyword id="KW-0699">rRNA-binding</keyword>
<sequence length="72" mass="8373">MSKEDMIEFSGTVMELLPNAMFRVKLDNEHSILAHTSGKMRKNRIRVLAGDRVNVEMTPYDLTKGRITFRFK</sequence>
<protein>
    <recommendedName>
        <fullName evidence="1">Translation initiation factor IF-1</fullName>
    </recommendedName>
</protein>
<comment type="function">
    <text evidence="1">One of the essential components for the initiation of protein synthesis. Stabilizes the binding of IF-2 and IF-3 on the 30S subunit to which N-formylmethionyl-tRNA(fMet) subsequently binds. Helps modulate mRNA selection, yielding the 30S pre-initiation complex (PIC). Upon addition of the 50S ribosomal subunit IF-1, IF-2 and IF-3 are released leaving the mature 70S translation initiation complex.</text>
</comment>
<comment type="subunit">
    <text evidence="1">Component of the 30S ribosomal translation pre-initiation complex which assembles on the 30S ribosome in the order IF-2 and IF-3, IF-1 and N-formylmethionyl-tRNA(fMet); mRNA recruitment can occur at any time during PIC assembly.</text>
</comment>
<comment type="subcellular location">
    <subcellularLocation>
        <location evidence="1">Cytoplasm</location>
    </subcellularLocation>
</comment>
<comment type="similarity">
    <text evidence="1">Belongs to the IF-1 family.</text>
</comment>
<dbReference type="EMBL" id="CP000394">
    <property type="protein sequence ID" value="ABI61928.1"/>
    <property type="molecule type" value="Genomic_DNA"/>
</dbReference>
<dbReference type="RefSeq" id="WP_011631737.1">
    <property type="nucleotide sequence ID" value="NC_008343.2"/>
</dbReference>
<dbReference type="SMR" id="Q0BTC4"/>
<dbReference type="STRING" id="391165.GbCGDNIH1_1030"/>
<dbReference type="GeneID" id="69745289"/>
<dbReference type="KEGG" id="gbe:GbCGDNIH1_1030"/>
<dbReference type="eggNOG" id="COG0361">
    <property type="taxonomic scope" value="Bacteria"/>
</dbReference>
<dbReference type="HOGENOM" id="CLU_151267_1_0_5"/>
<dbReference type="OrthoDB" id="9803250at2"/>
<dbReference type="Proteomes" id="UP000001963">
    <property type="component" value="Chromosome"/>
</dbReference>
<dbReference type="GO" id="GO:0005829">
    <property type="term" value="C:cytosol"/>
    <property type="evidence" value="ECO:0007669"/>
    <property type="project" value="TreeGrafter"/>
</dbReference>
<dbReference type="GO" id="GO:0043022">
    <property type="term" value="F:ribosome binding"/>
    <property type="evidence" value="ECO:0007669"/>
    <property type="project" value="UniProtKB-UniRule"/>
</dbReference>
<dbReference type="GO" id="GO:0019843">
    <property type="term" value="F:rRNA binding"/>
    <property type="evidence" value="ECO:0007669"/>
    <property type="project" value="UniProtKB-UniRule"/>
</dbReference>
<dbReference type="GO" id="GO:0003743">
    <property type="term" value="F:translation initiation factor activity"/>
    <property type="evidence" value="ECO:0007669"/>
    <property type="project" value="UniProtKB-UniRule"/>
</dbReference>
<dbReference type="CDD" id="cd04451">
    <property type="entry name" value="S1_IF1"/>
    <property type="match status" value="1"/>
</dbReference>
<dbReference type="FunFam" id="2.40.50.140:FF:000002">
    <property type="entry name" value="Translation initiation factor IF-1"/>
    <property type="match status" value="1"/>
</dbReference>
<dbReference type="Gene3D" id="2.40.50.140">
    <property type="entry name" value="Nucleic acid-binding proteins"/>
    <property type="match status" value="1"/>
</dbReference>
<dbReference type="HAMAP" id="MF_00075">
    <property type="entry name" value="IF_1"/>
    <property type="match status" value="1"/>
</dbReference>
<dbReference type="InterPro" id="IPR012340">
    <property type="entry name" value="NA-bd_OB-fold"/>
</dbReference>
<dbReference type="InterPro" id="IPR006196">
    <property type="entry name" value="RNA-binding_domain_S1_IF1"/>
</dbReference>
<dbReference type="InterPro" id="IPR004368">
    <property type="entry name" value="TIF_IF1"/>
</dbReference>
<dbReference type="NCBIfam" id="TIGR00008">
    <property type="entry name" value="infA"/>
    <property type="match status" value="1"/>
</dbReference>
<dbReference type="PANTHER" id="PTHR33370">
    <property type="entry name" value="TRANSLATION INITIATION FACTOR IF-1, CHLOROPLASTIC"/>
    <property type="match status" value="1"/>
</dbReference>
<dbReference type="PANTHER" id="PTHR33370:SF1">
    <property type="entry name" value="TRANSLATION INITIATION FACTOR IF-1, CHLOROPLASTIC"/>
    <property type="match status" value="1"/>
</dbReference>
<dbReference type="Pfam" id="PF01176">
    <property type="entry name" value="eIF-1a"/>
    <property type="match status" value="1"/>
</dbReference>
<dbReference type="SUPFAM" id="SSF50249">
    <property type="entry name" value="Nucleic acid-binding proteins"/>
    <property type="match status" value="1"/>
</dbReference>
<dbReference type="PROSITE" id="PS50832">
    <property type="entry name" value="S1_IF1_TYPE"/>
    <property type="match status" value="1"/>
</dbReference>